<evidence type="ECO:0000256" key="1">
    <source>
        <dbReference type="SAM" id="MobiDB-lite"/>
    </source>
</evidence>
<evidence type="ECO:0000269" key="2">
    <source>
    </source>
</evidence>
<evidence type="ECO:0000305" key="3"/>
<keyword id="KW-1185">Reference proteome</keyword>
<proteinExistence type="uncertain"/>
<accession>Q6XXX2</accession>
<name>CU024_HUMAN</name>
<comment type="tissue specificity">
    <text evidence="2">Expressed in a range of cell lines, including B-cell lymphoma and prostate.</text>
</comment>
<comment type="caution">
    <text evidence="3">Product of a dubious CDS prediction. Probable non-coding RNA. At least 6 alternative mRNA transcripts exist, with consensus splice donor and acceptor sites, but no coding potential nor murine ortholog. This protein sequence corresponds to the so-called isoforms C21orf24-6 and C21orf24-7.</text>
</comment>
<gene>
    <name type="primary">LINC00114</name>
    <name type="synonym">C21orf24</name>
    <name type="synonym">NCRNA00114</name>
</gene>
<organism>
    <name type="scientific">Homo sapiens</name>
    <name type="common">Human</name>
    <dbReference type="NCBI Taxonomy" id="9606"/>
    <lineage>
        <taxon>Eukaryota</taxon>
        <taxon>Metazoa</taxon>
        <taxon>Chordata</taxon>
        <taxon>Craniata</taxon>
        <taxon>Vertebrata</taxon>
        <taxon>Euteleostomi</taxon>
        <taxon>Mammalia</taxon>
        <taxon>Eutheria</taxon>
        <taxon>Euarchontoglires</taxon>
        <taxon>Primates</taxon>
        <taxon>Haplorrhini</taxon>
        <taxon>Catarrhini</taxon>
        <taxon>Hominidae</taxon>
        <taxon>Homo</taxon>
    </lineage>
</organism>
<dbReference type="EMBL" id="AY204749">
    <property type="protein sequence ID" value="AAP41722.1"/>
    <property type="molecule type" value="mRNA"/>
</dbReference>
<dbReference type="EMBL" id="AY204748">
    <property type="protein sequence ID" value="AAP41721.1"/>
    <property type="molecule type" value="mRNA"/>
</dbReference>
<dbReference type="IntAct" id="Q6XXX2">
    <property type="interactions" value="1"/>
</dbReference>
<dbReference type="BioMuta" id="HGNC:1265"/>
<dbReference type="PeptideAtlas" id="Q6XXX2"/>
<dbReference type="AGR" id="HGNC:1265"/>
<dbReference type="GeneCards" id="LINC00114"/>
<dbReference type="HGNC" id="HGNC:1265">
    <property type="gene designation" value="LINC00114"/>
</dbReference>
<dbReference type="MIM" id="611723">
    <property type="type" value="gene"/>
</dbReference>
<dbReference type="neXtProt" id="NX_Q6XXX2"/>
<dbReference type="InParanoid" id="Q6XXX2"/>
<dbReference type="PAN-GO" id="Q6XXX2">
    <property type="GO annotations" value="0 GO annotations based on evolutionary models"/>
</dbReference>
<dbReference type="PathwayCommons" id="Q6XXX2"/>
<dbReference type="ChiTaRS" id="LINC00114">
    <property type="organism name" value="human"/>
</dbReference>
<dbReference type="Pharos" id="Q6XXX2">
    <property type="development level" value="Tdark"/>
</dbReference>
<dbReference type="Proteomes" id="UP000005640">
    <property type="component" value="Unplaced"/>
</dbReference>
<dbReference type="RNAct" id="Q6XXX2">
    <property type="molecule type" value="protein"/>
</dbReference>
<reference key="1">
    <citation type="journal article" date="2004" name="Gene">
        <title>Detailed mapping of the ERG-ETS2 interval of human chromosome 21 and comparison with the region of conserved synteny on mouse chromosome 16.</title>
        <authorList>
            <person name="Owczarek C.M."/>
            <person name="Portbury K.J."/>
            <person name="Hardy M.P."/>
            <person name="O'Leary D.A."/>
            <person name="Kudoh J."/>
            <person name="Shibuya K."/>
            <person name="Shimizu N."/>
            <person name="Kola I."/>
            <person name="Hertzog P.J."/>
        </authorList>
    </citation>
    <scope>NUCLEOTIDE SEQUENCE [MRNA]</scope>
    <scope>TISSUE SPECIFICITY</scope>
</reference>
<feature type="chain" id="PRO_0000244263" description="Putative uncharacterized protein encoded by LINC00114">
    <location>
        <begin position="1"/>
        <end position="140"/>
    </location>
</feature>
<feature type="region of interest" description="Disordered" evidence="1">
    <location>
        <begin position="34"/>
        <end position="88"/>
    </location>
</feature>
<feature type="sequence variant" id="VAR_026884" description="In dbSNP:rs2836662.">
    <original>S</original>
    <variation>T</variation>
    <location>
        <position position="21"/>
    </location>
</feature>
<feature type="sequence variant" id="VAR_026885" description="In dbSNP:rs11908799.">
    <original>N</original>
    <variation>K</variation>
    <location>
        <position position="39"/>
    </location>
</feature>
<feature type="sequence variant" id="VAR_026886" description="In dbSNP:rs11908743.">
    <original>A</original>
    <variation>S</variation>
    <location>
        <position position="52"/>
    </location>
</feature>
<feature type="sequence variant" id="VAR_026887" description="In dbSNP:rs16996776.">
    <original>M</original>
    <variation>R</variation>
    <location>
        <position position="104"/>
    </location>
</feature>
<protein>
    <recommendedName>
        <fullName>Putative uncharacterized protein encoded by LINC00114</fullName>
    </recommendedName>
</protein>
<sequence length="140" mass="15753">MQTTWQPGCSYPTSWLSSQESFSKMRTGWRGAIPLRWRNRARNREKPHSPRAVSSPATHSLPPSNPCRLTPTLSSARPREGSCPSKCSCPGGNWSNTALSAELMWAEGRFSGGCLPVYMRQNINPGCQEQWEGEERSRWL</sequence>